<comment type="function">
    <text evidence="1">Enhances the ribosomal termination-reinitiation event leading to the translation of major open reading frames on the polycistronic viral RNAs.</text>
</comment>
<comment type="interaction">
    <interactant intactId="EBI-8597718">
        <id>P16666</id>
    </interactant>
    <interactant intactId="EBI-1382370">
        <id>Q9FR53</id>
        <label>TOR</label>
    </interactant>
    <organismsDiffer>true</organismsDiffer>
    <experiments>6</experiments>
</comment>
<comment type="subcellular location">
    <subcellularLocation>
        <location>Host cytoplasm</location>
    </subcellularLocation>
    <text>Found in cytoplasmic occlusion bodies.</text>
</comment>
<comment type="miscellaneous">
    <text>The inclusion bodies are the site of viral DNA synthesis, virion assembly and accumulation in the infected cell.</text>
</comment>
<comment type="similarity">
    <text evidence="3">Belongs to the caulimoviridae viroplasmin family.</text>
</comment>
<sequence>MEDIEKLLLQEKILMLELDLVRAKISLARAKGSMQQGGNSLHRETPVKEEAVHSALATFAPIQAKAIPEQTAPGKESTNPLMVSILPKDMKSVQTEKKRLVTPMDFLRPNQGIQIPQKSEPNSSVAPNRAESGIQHPHSNYYVVYNGPHAGIYDDWGSAKAATNGVPGVAHKKFATITEARAAADVYTTAQQAERLNFIPKGEAQLKPKSFVKALTSPPKQKAQWLTLGVKKPSSDPAPKEVSFDQETTMDDFLYLYDLGRRFDGEGDDTVFTTDNESISLFNFRKNANPEMIREAYNAGLIRTIYPSNNLQEIKYLPKKVKDAVKKFRTNCIKNTEKDIFLKIKSTIPVWQDQGLLHKPKHVIEIGVSKKIVPKESKAMESKDHSEDLIELATKTGEQFIQSLLRLNDKKKIFVNLVEHDTLVYSKNTKETVSEDQRAIETFQQRVITPNLLGFHCPSICHFIKRTVEKEGGAYKCHHCDKGKAIVQDASADSKVADKEGPPLTTNVEKEDVSTTSSKASG</sequence>
<evidence type="ECO:0000250" key="1">
    <source>
        <dbReference type="UniProtKB" id="P03558"/>
    </source>
</evidence>
<evidence type="ECO:0000256" key="2">
    <source>
        <dbReference type="SAM" id="MobiDB-lite"/>
    </source>
</evidence>
<evidence type="ECO:0000305" key="3"/>
<protein>
    <recommendedName>
        <fullName>Transactivator/viroplasmin protein</fullName>
        <shortName>Tav</shortName>
    </recommendedName>
    <alternativeName>
        <fullName>Inclusion body matrix protein</fullName>
    </alternativeName>
</protein>
<name>IBMP_CAMVB</name>
<reference key="1">
    <citation type="journal article" date="1988" name="J. Gen. Virol.">
        <title>Molecular properties of Bari 1, a mild strain of cauliflower mosaic virus.</title>
        <authorList>
            <person name="Stratford R."/>
            <person name="Plaskitt K.A."/>
            <person name="Turner D.S."/>
            <person name="Markham P.G."/>
            <person name="Covey S.N."/>
        </authorList>
    </citation>
    <scope>NUCLEOTIDE SEQUENCE [GENOMIC DNA]</scope>
</reference>
<proteinExistence type="evidence at protein level"/>
<organismHost>
    <name type="scientific">Arabidopsis thaliana</name>
    <name type="common">Mouse-ear cress</name>
    <dbReference type="NCBI Taxonomy" id="3702"/>
</organismHost>
<organismHost>
    <name type="scientific">Brassica</name>
    <dbReference type="NCBI Taxonomy" id="3705"/>
</organismHost>
<organismHost>
    <name type="scientific">Raphanus</name>
    <dbReference type="NCBI Taxonomy" id="3725"/>
</organismHost>
<gene>
    <name type="ORF">ORF VI</name>
</gene>
<keyword id="KW-1035">Host cytoplasm</keyword>
<keyword id="KW-0810">Translation regulation</keyword>
<organism>
    <name type="scientific">Cauliflower mosaic virus (strain Bari 1)</name>
    <name type="common">CaMV</name>
    <dbReference type="NCBI Taxonomy" id="10643"/>
    <lineage>
        <taxon>Viruses</taxon>
        <taxon>Riboviria</taxon>
        <taxon>Pararnavirae</taxon>
        <taxon>Artverviricota</taxon>
        <taxon>Revtraviricetes</taxon>
        <taxon>Ortervirales</taxon>
        <taxon>Caulimoviridae</taxon>
        <taxon>Caulimovirus</taxon>
        <taxon>Caulimovirus tessellobrassicae</taxon>
    </lineage>
</organism>
<dbReference type="EMBL" id="D00335">
    <property type="protein sequence ID" value="BAA00241.1"/>
    <property type="molecule type" value="Genomic_DNA"/>
</dbReference>
<dbReference type="PIR" id="JA0072">
    <property type="entry name" value="JA0072"/>
</dbReference>
<dbReference type="SMR" id="P16666"/>
<dbReference type="IntAct" id="P16666">
    <property type="interactions" value="2"/>
</dbReference>
<dbReference type="MINT" id="P16666"/>
<dbReference type="GO" id="GO:0030430">
    <property type="term" value="C:host cell cytoplasm"/>
    <property type="evidence" value="ECO:0007669"/>
    <property type="project" value="UniProtKB-SubCell"/>
</dbReference>
<dbReference type="GO" id="GO:0006417">
    <property type="term" value="P:regulation of translation"/>
    <property type="evidence" value="ECO:0007669"/>
    <property type="project" value="UniProtKB-KW"/>
</dbReference>
<dbReference type="Gene3D" id="3.40.970.10">
    <property type="entry name" value="Ribonuclease H1, N-terminal domain"/>
    <property type="match status" value="1"/>
</dbReference>
<dbReference type="InterPro" id="IPR009027">
    <property type="entry name" value="Ribosomal_bL9/RNase_H1_N"/>
</dbReference>
<dbReference type="InterPro" id="IPR011320">
    <property type="entry name" value="RNase_H1_N"/>
</dbReference>
<dbReference type="InterPro" id="IPR037056">
    <property type="entry name" value="RNase_H1_N_sf"/>
</dbReference>
<dbReference type="Pfam" id="PF01693">
    <property type="entry name" value="Cauli_VI"/>
    <property type="match status" value="1"/>
</dbReference>
<dbReference type="SUPFAM" id="SSF55658">
    <property type="entry name" value="L9 N-domain-like"/>
    <property type="match status" value="1"/>
</dbReference>
<feature type="chain" id="PRO_0000222038" description="Transactivator/viroplasmin protein">
    <location>
        <begin position="1"/>
        <end position="522"/>
    </location>
</feature>
<feature type="region of interest" description="Disordered" evidence="2">
    <location>
        <begin position="111"/>
        <end position="133"/>
    </location>
</feature>
<feature type="region of interest" description="Disordered" evidence="2">
    <location>
        <begin position="491"/>
        <end position="522"/>
    </location>
</feature>
<feature type="compositionally biased region" description="Polar residues" evidence="2">
    <location>
        <begin position="111"/>
        <end position="126"/>
    </location>
</feature>
<accession>P16666</accession>